<gene>
    <name evidence="1" type="primary">rplP</name>
    <name type="ordered locus">Saro_1256</name>
</gene>
<proteinExistence type="inferred from homology"/>
<feature type="chain" id="PRO_0000251652" description="Large ribosomal subunit protein uL16">
    <location>
        <begin position="1"/>
        <end position="144"/>
    </location>
</feature>
<sequence length="144" mass="15951">MLQPKKTKFRKAFKGRIHGLAKGGTDLNFGSYGLKALEPERVTARQIEAARRAITRHIRRQGRLWIRVFPDVPVSKKPAEVRQGKGKGSIEYWAARVKPGRILFELDGVPGPLAAEAFSRAAMKLPIKTKVVARLGDTSHLAGE</sequence>
<evidence type="ECO:0000255" key="1">
    <source>
        <dbReference type="HAMAP-Rule" id="MF_01342"/>
    </source>
</evidence>
<evidence type="ECO:0000305" key="2"/>
<accession>Q2G8X3</accession>
<keyword id="KW-1185">Reference proteome</keyword>
<keyword id="KW-0687">Ribonucleoprotein</keyword>
<keyword id="KW-0689">Ribosomal protein</keyword>
<keyword id="KW-0694">RNA-binding</keyword>
<keyword id="KW-0699">rRNA-binding</keyword>
<keyword id="KW-0820">tRNA-binding</keyword>
<dbReference type="EMBL" id="CP000248">
    <property type="protein sequence ID" value="ABD25700.1"/>
    <property type="molecule type" value="Genomic_DNA"/>
</dbReference>
<dbReference type="RefSeq" id="WP_011444914.1">
    <property type="nucleotide sequence ID" value="NC_007794.1"/>
</dbReference>
<dbReference type="SMR" id="Q2G8X3"/>
<dbReference type="STRING" id="279238.Saro_1256"/>
<dbReference type="KEGG" id="nar:Saro_1256"/>
<dbReference type="eggNOG" id="COG0197">
    <property type="taxonomic scope" value="Bacteria"/>
</dbReference>
<dbReference type="HOGENOM" id="CLU_078858_2_1_5"/>
<dbReference type="Proteomes" id="UP000009134">
    <property type="component" value="Chromosome"/>
</dbReference>
<dbReference type="GO" id="GO:0022625">
    <property type="term" value="C:cytosolic large ribosomal subunit"/>
    <property type="evidence" value="ECO:0007669"/>
    <property type="project" value="TreeGrafter"/>
</dbReference>
<dbReference type="GO" id="GO:0019843">
    <property type="term" value="F:rRNA binding"/>
    <property type="evidence" value="ECO:0007669"/>
    <property type="project" value="UniProtKB-UniRule"/>
</dbReference>
<dbReference type="GO" id="GO:0003735">
    <property type="term" value="F:structural constituent of ribosome"/>
    <property type="evidence" value="ECO:0007669"/>
    <property type="project" value="InterPro"/>
</dbReference>
<dbReference type="GO" id="GO:0000049">
    <property type="term" value="F:tRNA binding"/>
    <property type="evidence" value="ECO:0007669"/>
    <property type="project" value="UniProtKB-KW"/>
</dbReference>
<dbReference type="GO" id="GO:0006412">
    <property type="term" value="P:translation"/>
    <property type="evidence" value="ECO:0007669"/>
    <property type="project" value="UniProtKB-UniRule"/>
</dbReference>
<dbReference type="CDD" id="cd01433">
    <property type="entry name" value="Ribosomal_L16_L10e"/>
    <property type="match status" value="1"/>
</dbReference>
<dbReference type="FunFam" id="3.90.1170.10:FF:000001">
    <property type="entry name" value="50S ribosomal protein L16"/>
    <property type="match status" value="1"/>
</dbReference>
<dbReference type="Gene3D" id="3.90.1170.10">
    <property type="entry name" value="Ribosomal protein L10e/L16"/>
    <property type="match status" value="1"/>
</dbReference>
<dbReference type="HAMAP" id="MF_01342">
    <property type="entry name" value="Ribosomal_uL16"/>
    <property type="match status" value="1"/>
</dbReference>
<dbReference type="InterPro" id="IPR047873">
    <property type="entry name" value="Ribosomal_uL16"/>
</dbReference>
<dbReference type="InterPro" id="IPR000114">
    <property type="entry name" value="Ribosomal_uL16_bact-type"/>
</dbReference>
<dbReference type="InterPro" id="IPR020798">
    <property type="entry name" value="Ribosomal_uL16_CS"/>
</dbReference>
<dbReference type="InterPro" id="IPR016180">
    <property type="entry name" value="Ribosomal_uL16_dom"/>
</dbReference>
<dbReference type="InterPro" id="IPR036920">
    <property type="entry name" value="Ribosomal_uL16_sf"/>
</dbReference>
<dbReference type="NCBIfam" id="TIGR01164">
    <property type="entry name" value="rplP_bact"/>
    <property type="match status" value="1"/>
</dbReference>
<dbReference type="PANTHER" id="PTHR12220">
    <property type="entry name" value="50S/60S RIBOSOMAL PROTEIN L16"/>
    <property type="match status" value="1"/>
</dbReference>
<dbReference type="PANTHER" id="PTHR12220:SF13">
    <property type="entry name" value="LARGE RIBOSOMAL SUBUNIT PROTEIN UL16M"/>
    <property type="match status" value="1"/>
</dbReference>
<dbReference type="Pfam" id="PF00252">
    <property type="entry name" value="Ribosomal_L16"/>
    <property type="match status" value="1"/>
</dbReference>
<dbReference type="PRINTS" id="PR00060">
    <property type="entry name" value="RIBOSOMALL16"/>
</dbReference>
<dbReference type="SUPFAM" id="SSF54686">
    <property type="entry name" value="Ribosomal protein L16p/L10e"/>
    <property type="match status" value="1"/>
</dbReference>
<dbReference type="PROSITE" id="PS00586">
    <property type="entry name" value="RIBOSOMAL_L16_1"/>
    <property type="match status" value="1"/>
</dbReference>
<organism>
    <name type="scientific">Novosphingobium aromaticivorans (strain ATCC 700278 / DSM 12444 / CCUG 56034 / CIP 105152 / NBRC 16084 / F199)</name>
    <dbReference type="NCBI Taxonomy" id="279238"/>
    <lineage>
        <taxon>Bacteria</taxon>
        <taxon>Pseudomonadati</taxon>
        <taxon>Pseudomonadota</taxon>
        <taxon>Alphaproteobacteria</taxon>
        <taxon>Sphingomonadales</taxon>
        <taxon>Sphingomonadaceae</taxon>
        <taxon>Novosphingobium</taxon>
    </lineage>
</organism>
<name>RL16_NOVAD</name>
<reference key="1">
    <citation type="submission" date="2006-01" db="EMBL/GenBank/DDBJ databases">
        <title>Complete sequence of Novosphingobium aromaticivorans DSM 12444.</title>
        <authorList>
            <consortium name="US DOE Joint Genome Institute"/>
            <person name="Copeland A."/>
            <person name="Lucas S."/>
            <person name="Lapidus A."/>
            <person name="Barry K."/>
            <person name="Detter J.C."/>
            <person name="Glavina T."/>
            <person name="Hammon N."/>
            <person name="Israni S."/>
            <person name="Pitluck S."/>
            <person name="Chain P."/>
            <person name="Malfatti S."/>
            <person name="Shin M."/>
            <person name="Vergez L."/>
            <person name="Schmutz J."/>
            <person name="Larimer F."/>
            <person name="Land M."/>
            <person name="Kyrpides N."/>
            <person name="Ivanova N."/>
            <person name="Fredrickson J."/>
            <person name="Balkwill D."/>
            <person name="Romine M.F."/>
            <person name="Richardson P."/>
        </authorList>
    </citation>
    <scope>NUCLEOTIDE SEQUENCE [LARGE SCALE GENOMIC DNA]</scope>
    <source>
        <strain>ATCC 700278 / DSM 12444 / CCUG 56034 / CIP 105152 / NBRC 16084 / F199</strain>
    </source>
</reference>
<protein>
    <recommendedName>
        <fullName evidence="1">Large ribosomal subunit protein uL16</fullName>
    </recommendedName>
    <alternativeName>
        <fullName evidence="2">50S ribosomal protein L16</fullName>
    </alternativeName>
</protein>
<comment type="function">
    <text evidence="1">Binds 23S rRNA and is also seen to make contacts with the A and possibly P site tRNAs.</text>
</comment>
<comment type="subunit">
    <text evidence="1">Part of the 50S ribosomal subunit.</text>
</comment>
<comment type="similarity">
    <text evidence="1">Belongs to the universal ribosomal protein uL16 family.</text>
</comment>